<accession>B8IQY6</accession>
<evidence type="ECO:0000255" key="1">
    <source>
        <dbReference type="HAMAP-Rule" id="MF_00291"/>
    </source>
</evidence>
<evidence type="ECO:0000305" key="2"/>
<gene>
    <name evidence="1" type="primary">rpsB</name>
    <name type="ordered locus">Mnod_1698</name>
</gene>
<feature type="chain" id="PRO_1000194339" description="Small ribosomal subunit protein uS2">
    <location>
        <begin position="1"/>
        <end position="349"/>
    </location>
</feature>
<comment type="similarity">
    <text evidence="1">Belongs to the universal ribosomal protein uS2 family.</text>
</comment>
<dbReference type="EMBL" id="CP001349">
    <property type="protein sequence ID" value="ACL56688.1"/>
    <property type="molecule type" value="Genomic_DNA"/>
</dbReference>
<dbReference type="RefSeq" id="WP_015928381.1">
    <property type="nucleotide sequence ID" value="NC_011894.1"/>
</dbReference>
<dbReference type="SMR" id="B8IQY6"/>
<dbReference type="STRING" id="460265.Mnod_1698"/>
<dbReference type="KEGG" id="mno:Mnod_1698"/>
<dbReference type="eggNOG" id="COG0052">
    <property type="taxonomic scope" value="Bacteria"/>
</dbReference>
<dbReference type="eggNOG" id="COG3743">
    <property type="taxonomic scope" value="Bacteria"/>
</dbReference>
<dbReference type="HOGENOM" id="CLU_040318_2_1_5"/>
<dbReference type="OrthoDB" id="9808036at2"/>
<dbReference type="Proteomes" id="UP000008207">
    <property type="component" value="Chromosome"/>
</dbReference>
<dbReference type="GO" id="GO:0022627">
    <property type="term" value="C:cytosolic small ribosomal subunit"/>
    <property type="evidence" value="ECO:0007669"/>
    <property type="project" value="TreeGrafter"/>
</dbReference>
<dbReference type="GO" id="GO:0003735">
    <property type="term" value="F:structural constituent of ribosome"/>
    <property type="evidence" value="ECO:0007669"/>
    <property type="project" value="InterPro"/>
</dbReference>
<dbReference type="GO" id="GO:0006412">
    <property type="term" value="P:translation"/>
    <property type="evidence" value="ECO:0007669"/>
    <property type="project" value="UniProtKB-UniRule"/>
</dbReference>
<dbReference type="CDD" id="cd01425">
    <property type="entry name" value="RPS2"/>
    <property type="match status" value="1"/>
</dbReference>
<dbReference type="FunFam" id="1.10.287.610:FF:000001">
    <property type="entry name" value="30S ribosomal protein S2"/>
    <property type="match status" value="1"/>
</dbReference>
<dbReference type="Gene3D" id="1.10.150.20">
    <property type="entry name" value="5' to 3' exonuclease, C-terminal subdomain"/>
    <property type="match status" value="1"/>
</dbReference>
<dbReference type="Gene3D" id="3.40.50.10490">
    <property type="entry name" value="Glucose-6-phosphate isomerase like protein, domain 1"/>
    <property type="match status" value="1"/>
</dbReference>
<dbReference type="Gene3D" id="1.10.287.610">
    <property type="entry name" value="Helix hairpin bin"/>
    <property type="match status" value="1"/>
</dbReference>
<dbReference type="HAMAP" id="MF_00291_B">
    <property type="entry name" value="Ribosomal_uS2_B"/>
    <property type="match status" value="1"/>
</dbReference>
<dbReference type="InterPro" id="IPR001865">
    <property type="entry name" value="Ribosomal_uS2"/>
</dbReference>
<dbReference type="InterPro" id="IPR005706">
    <property type="entry name" value="Ribosomal_uS2_bac/mit/plastid"/>
</dbReference>
<dbReference type="InterPro" id="IPR018130">
    <property type="entry name" value="Ribosomal_uS2_CS"/>
</dbReference>
<dbReference type="InterPro" id="IPR023591">
    <property type="entry name" value="Ribosomal_uS2_flav_dom_sf"/>
</dbReference>
<dbReference type="NCBIfam" id="NF008966">
    <property type="entry name" value="PRK12311.1"/>
    <property type="match status" value="1"/>
</dbReference>
<dbReference type="NCBIfam" id="TIGR01011">
    <property type="entry name" value="rpsB_bact"/>
    <property type="match status" value="1"/>
</dbReference>
<dbReference type="PANTHER" id="PTHR12534">
    <property type="entry name" value="30S RIBOSOMAL PROTEIN S2 PROKARYOTIC AND ORGANELLAR"/>
    <property type="match status" value="1"/>
</dbReference>
<dbReference type="PANTHER" id="PTHR12534:SF0">
    <property type="entry name" value="SMALL RIBOSOMAL SUBUNIT PROTEIN US2M"/>
    <property type="match status" value="1"/>
</dbReference>
<dbReference type="Pfam" id="PF00318">
    <property type="entry name" value="Ribosomal_S2"/>
    <property type="match status" value="1"/>
</dbReference>
<dbReference type="PRINTS" id="PR00395">
    <property type="entry name" value="RIBOSOMALS2"/>
</dbReference>
<dbReference type="SUPFAM" id="SSF52313">
    <property type="entry name" value="Ribosomal protein S2"/>
    <property type="match status" value="1"/>
</dbReference>
<dbReference type="PROSITE" id="PS00962">
    <property type="entry name" value="RIBOSOMAL_S2_1"/>
    <property type="match status" value="1"/>
</dbReference>
<dbReference type="PROSITE" id="PS00963">
    <property type="entry name" value="RIBOSOMAL_S2_2"/>
    <property type="match status" value="1"/>
</dbReference>
<protein>
    <recommendedName>
        <fullName evidence="1">Small ribosomal subunit protein uS2</fullName>
    </recommendedName>
    <alternativeName>
        <fullName evidence="2">30S ribosomal protein S2</fullName>
    </alternativeName>
</protein>
<name>RS2_METNO</name>
<proteinExistence type="inferred from homology"/>
<sequence length="349" mass="37696">MALPDFSMRQLLEAGAHFGHQAHRWNPKMQSYIFGTRNNIHIIDLAQTVPALYQALQAVSDTVAKGGRVLFVGTKRQAADVVAESARRSAQYFVNSRWLGGTLTNWKTISGSIQRLRKVDEILAGGGQGLTKKERLMLSREKDKLEKALGGIKDMGGVPDLLFVIDTNKEQLAIKEAKRLGIPVAAIVDTNSDPDGITYVVPANDDAGRAIALYCDLIARAAIDGISRGQGALGMDLGASEEPLAEELPANLNEPEVAHLDIAEPYVGEPFELLAAPRGAPDDLTKLTGVGPQLVQKLNDAGIYHYWQIAAMAPEDVAKVDSELKLNGRIERDGWINQARAFVEAAAAA</sequence>
<keyword id="KW-1185">Reference proteome</keyword>
<keyword id="KW-0687">Ribonucleoprotein</keyword>
<keyword id="KW-0689">Ribosomal protein</keyword>
<reference key="1">
    <citation type="submission" date="2009-01" db="EMBL/GenBank/DDBJ databases">
        <title>Complete sequence of chromosome of Methylobacterium nodulans ORS 2060.</title>
        <authorList>
            <consortium name="US DOE Joint Genome Institute"/>
            <person name="Lucas S."/>
            <person name="Copeland A."/>
            <person name="Lapidus A."/>
            <person name="Glavina del Rio T."/>
            <person name="Dalin E."/>
            <person name="Tice H."/>
            <person name="Bruce D."/>
            <person name="Goodwin L."/>
            <person name="Pitluck S."/>
            <person name="Sims D."/>
            <person name="Brettin T."/>
            <person name="Detter J.C."/>
            <person name="Han C."/>
            <person name="Larimer F."/>
            <person name="Land M."/>
            <person name="Hauser L."/>
            <person name="Kyrpides N."/>
            <person name="Ivanova N."/>
            <person name="Marx C.J."/>
            <person name="Richardson P."/>
        </authorList>
    </citation>
    <scope>NUCLEOTIDE SEQUENCE [LARGE SCALE GENOMIC DNA]</scope>
    <source>
        <strain>LMG 21967 / CNCM I-2342 / ORS 2060</strain>
    </source>
</reference>
<organism>
    <name type="scientific">Methylobacterium nodulans (strain LMG 21967 / CNCM I-2342 / ORS 2060)</name>
    <dbReference type="NCBI Taxonomy" id="460265"/>
    <lineage>
        <taxon>Bacteria</taxon>
        <taxon>Pseudomonadati</taxon>
        <taxon>Pseudomonadota</taxon>
        <taxon>Alphaproteobacteria</taxon>
        <taxon>Hyphomicrobiales</taxon>
        <taxon>Methylobacteriaceae</taxon>
        <taxon>Methylobacterium</taxon>
    </lineage>
</organism>